<organism>
    <name type="scientific">Sulfolobus acidocaldarius (strain ATCC 33909 / DSM 639 / JCM 8929 / NBRC 15157 / NCIMB 11770)</name>
    <dbReference type="NCBI Taxonomy" id="330779"/>
    <lineage>
        <taxon>Archaea</taxon>
        <taxon>Thermoproteota</taxon>
        <taxon>Thermoprotei</taxon>
        <taxon>Sulfolobales</taxon>
        <taxon>Sulfolobaceae</taxon>
        <taxon>Sulfolobus</taxon>
    </lineage>
</organism>
<dbReference type="EC" id="6.3.5.3" evidence="1"/>
<dbReference type="EMBL" id="CP000077">
    <property type="protein sequence ID" value="AAY80922.1"/>
    <property type="molecule type" value="Genomic_DNA"/>
</dbReference>
<dbReference type="RefSeq" id="WP_011278424.1">
    <property type="nucleotide sequence ID" value="NC_007181.1"/>
</dbReference>
<dbReference type="SMR" id="Q4J8F8"/>
<dbReference type="STRING" id="330779.Saci_1610"/>
<dbReference type="GeneID" id="14552103"/>
<dbReference type="GeneID" id="78441953"/>
<dbReference type="KEGG" id="sai:Saci_1610"/>
<dbReference type="PATRIC" id="fig|330779.12.peg.1549"/>
<dbReference type="eggNOG" id="arCOG00641">
    <property type="taxonomic scope" value="Archaea"/>
</dbReference>
<dbReference type="HOGENOM" id="CLU_003100_0_1_2"/>
<dbReference type="UniPathway" id="UPA00074">
    <property type="reaction ID" value="UER00128"/>
</dbReference>
<dbReference type="Proteomes" id="UP000001018">
    <property type="component" value="Chromosome"/>
</dbReference>
<dbReference type="GO" id="GO:0005737">
    <property type="term" value="C:cytoplasm"/>
    <property type="evidence" value="ECO:0007669"/>
    <property type="project" value="UniProtKB-SubCell"/>
</dbReference>
<dbReference type="GO" id="GO:0005524">
    <property type="term" value="F:ATP binding"/>
    <property type="evidence" value="ECO:0007669"/>
    <property type="project" value="UniProtKB-UniRule"/>
</dbReference>
<dbReference type="GO" id="GO:0000287">
    <property type="term" value="F:magnesium ion binding"/>
    <property type="evidence" value="ECO:0007669"/>
    <property type="project" value="UniProtKB-UniRule"/>
</dbReference>
<dbReference type="GO" id="GO:0004642">
    <property type="term" value="F:phosphoribosylformylglycinamidine synthase activity"/>
    <property type="evidence" value="ECO:0007669"/>
    <property type="project" value="UniProtKB-UniRule"/>
</dbReference>
<dbReference type="GO" id="GO:0006189">
    <property type="term" value="P:'de novo' IMP biosynthetic process"/>
    <property type="evidence" value="ECO:0007669"/>
    <property type="project" value="UniProtKB-UniRule"/>
</dbReference>
<dbReference type="CDD" id="cd02204">
    <property type="entry name" value="PurL_repeat2"/>
    <property type="match status" value="1"/>
</dbReference>
<dbReference type="Gene3D" id="3.90.650.10">
    <property type="entry name" value="PurM-like C-terminal domain"/>
    <property type="match status" value="2"/>
</dbReference>
<dbReference type="Gene3D" id="3.30.1330.10">
    <property type="entry name" value="PurM-like, N-terminal domain"/>
    <property type="match status" value="2"/>
</dbReference>
<dbReference type="HAMAP" id="MF_00420">
    <property type="entry name" value="PurL_2"/>
    <property type="match status" value="1"/>
</dbReference>
<dbReference type="InterPro" id="IPR010074">
    <property type="entry name" value="PRibForGlyAmidine_synth_PurL"/>
</dbReference>
<dbReference type="InterPro" id="IPR041609">
    <property type="entry name" value="PurL_linker"/>
</dbReference>
<dbReference type="InterPro" id="IPR010918">
    <property type="entry name" value="PurM-like_C_dom"/>
</dbReference>
<dbReference type="InterPro" id="IPR036676">
    <property type="entry name" value="PurM-like_C_sf"/>
</dbReference>
<dbReference type="InterPro" id="IPR016188">
    <property type="entry name" value="PurM-like_N"/>
</dbReference>
<dbReference type="InterPro" id="IPR036921">
    <property type="entry name" value="PurM-like_N_sf"/>
</dbReference>
<dbReference type="NCBIfam" id="TIGR01736">
    <property type="entry name" value="FGAM_synth_II"/>
    <property type="match status" value="1"/>
</dbReference>
<dbReference type="NCBIfam" id="NF002290">
    <property type="entry name" value="PRK01213.1"/>
    <property type="match status" value="1"/>
</dbReference>
<dbReference type="PANTHER" id="PTHR43555">
    <property type="entry name" value="PHOSPHORIBOSYLFORMYLGLYCINAMIDINE SYNTHASE SUBUNIT PURL"/>
    <property type="match status" value="1"/>
</dbReference>
<dbReference type="PANTHER" id="PTHR43555:SF1">
    <property type="entry name" value="PHOSPHORIBOSYLFORMYLGLYCINAMIDINE SYNTHASE SUBUNIT PURL"/>
    <property type="match status" value="1"/>
</dbReference>
<dbReference type="Pfam" id="PF00586">
    <property type="entry name" value="AIRS"/>
    <property type="match status" value="2"/>
</dbReference>
<dbReference type="Pfam" id="PF02769">
    <property type="entry name" value="AIRS_C"/>
    <property type="match status" value="2"/>
</dbReference>
<dbReference type="Pfam" id="PF18072">
    <property type="entry name" value="FGAR-AT_linker"/>
    <property type="match status" value="1"/>
</dbReference>
<dbReference type="PIRSF" id="PIRSF001587">
    <property type="entry name" value="FGAM_synthase_II"/>
    <property type="match status" value="1"/>
</dbReference>
<dbReference type="SUPFAM" id="SSF56042">
    <property type="entry name" value="PurM C-terminal domain-like"/>
    <property type="match status" value="2"/>
</dbReference>
<dbReference type="SUPFAM" id="SSF55326">
    <property type="entry name" value="PurM N-terminal domain-like"/>
    <property type="match status" value="2"/>
</dbReference>
<evidence type="ECO:0000255" key="1">
    <source>
        <dbReference type="HAMAP-Rule" id="MF_00420"/>
    </source>
</evidence>
<feature type="chain" id="PRO_0000100524" description="Phosphoribosylformylglycinamidine synthase subunit PurL">
    <location>
        <begin position="1"/>
        <end position="710"/>
    </location>
</feature>
<feature type="active site" evidence="1">
    <location>
        <position position="36"/>
    </location>
</feature>
<feature type="active site" description="Proton acceptor" evidence="1">
    <location>
        <position position="84"/>
    </location>
</feature>
<feature type="binding site" evidence="1">
    <location>
        <position position="39"/>
    </location>
    <ligand>
        <name>ATP</name>
        <dbReference type="ChEBI" id="CHEBI:30616"/>
    </ligand>
</feature>
<feature type="binding site" evidence="1">
    <location>
        <position position="80"/>
    </location>
    <ligand>
        <name>ATP</name>
        <dbReference type="ChEBI" id="CHEBI:30616"/>
    </ligand>
</feature>
<feature type="binding site" evidence="1">
    <location>
        <position position="82"/>
    </location>
    <ligand>
        <name>Mg(2+)</name>
        <dbReference type="ChEBI" id="CHEBI:18420"/>
        <label>1</label>
    </ligand>
</feature>
<feature type="binding site" evidence="1">
    <location>
        <begin position="83"/>
        <end position="86"/>
    </location>
    <ligand>
        <name>substrate</name>
    </ligand>
</feature>
<feature type="binding site" evidence="1">
    <location>
        <position position="105"/>
    </location>
    <ligand>
        <name>substrate</name>
    </ligand>
</feature>
<feature type="binding site" evidence="1">
    <location>
        <position position="106"/>
    </location>
    <ligand>
        <name>Mg(2+)</name>
        <dbReference type="ChEBI" id="CHEBI:18420"/>
        <label>2</label>
    </ligand>
</feature>
<feature type="binding site" evidence="1">
    <location>
        <position position="226"/>
    </location>
    <ligand>
        <name>substrate</name>
    </ligand>
</feature>
<feature type="binding site" evidence="1">
    <location>
        <position position="252"/>
    </location>
    <ligand>
        <name>Mg(2+)</name>
        <dbReference type="ChEBI" id="CHEBI:18420"/>
        <label>2</label>
    </ligand>
</feature>
<feature type="binding site" evidence="1">
    <location>
        <begin position="294"/>
        <end position="296"/>
    </location>
    <ligand>
        <name>substrate</name>
    </ligand>
</feature>
<feature type="binding site" evidence="1">
    <location>
        <position position="470"/>
    </location>
    <ligand>
        <name>ATP</name>
        <dbReference type="ChEBI" id="CHEBI:30616"/>
    </ligand>
</feature>
<feature type="binding site" evidence="1">
    <location>
        <position position="507"/>
    </location>
    <ligand>
        <name>ATP</name>
        <dbReference type="ChEBI" id="CHEBI:30616"/>
    </ligand>
</feature>
<feature type="binding site" evidence="1">
    <location>
        <position position="510"/>
    </location>
    <ligand>
        <name>substrate</name>
    </ligand>
</feature>
<comment type="function">
    <text evidence="1">Part of the phosphoribosylformylglycinamidine synthase complex involved in the purines biosynthetic pathway. Catalyzes the ATP-dependent conversion of formylglycinamide ribonucleotide (FGAR) and glutamine to yield formylglycinamidine ribonucleotide (FGAM) and glutamate. The FGAM synthase complex is composed of three subunits. PurQ produces an ammonia molecule by converting glutamine to glutamate. PurL transfers the ammonia molecule to FGAR to form FGAM in an ATP-dependent manner. PurS interacts with PurQ and PurL and is thought to assist in the transfer of the ammonia molecule from PurQ to PurL.</text>
</comment>
<comment type="catalytic activity">
    <reaction evidence="1">
        <text>N(2)-formyl-N(1)-(5-phospho-beta-D-ribosyl)glycinamide + L-glutamine + ATP + H2O = 2-formamido-N(1)-(5-O-phospho-beta-D-ribosyl)acetamidine + L-glutamate + ADP + phosphate + H(+)</text>
        <dbReference type="Rhea" id="RHEA:17129"/>
        <dbReference type="ChEBI" id="CHEBI:15377"/>
        <dbReference type="ChEBI" id="CHEBI:15378"/>
        <dbReference type="ChEBI" id="CHEBI:29985"/>
        <dbReference type="ChEBI" id="CHEBI:30616"/>
        <dbReference type="ChEBI" id="CHEBI:43474"/>
        <dbReference type="ChEBI" id="CHEBI:58359"/>
        <dbReference type="ChEBI" id="CHEBI:147286"/>
        <dbReference type="ChEBI" id="CHEBI:147287"/>
        <dbReference type="ChEBI" id="CHEBI:456216"/>
        <dbReference type="EC" id="6.3.5.3"/>
    </reaction>
</comment>
<comment type="pathway">
    <text evidence="1">Purine metabolism; IMP biosynthesis via de novo pathway; 5-amino-1-(5-phospho-D-ribosyl)imidazole from N(2)-formyl-N(1)-(5-phospho-D-ribosyl)glycinamide: step 1/2.</text>
</comment>
<comment type="subunit">
    <text evidence="1">Monomer. Part of the FGAM synthase complex composed of 1 PurL, 1 PurQ and 2 PurS subunits.</text>
</comment>
<comment type="subcellular location">
    <subcellularLocation>
        <location evidence="1">Cytoplasm</location>
    </subcellularLocation>
</comment>
<comment type="similarity">
    <text evidence="1">Belongs to the FGAMS family.</text>
</comment>
<reference key="1">
    <citation type="journal article" date="2005" name="J. Bacteriol.">
        <title>The genome of Sulfolobus acidocaldarius, a model organism of the Crenarchaeota.</title>
        <authorList>
            <person name="Chen L."/>
            <person name="Bruegger K."/>
            <person name="Skovgaard M."/>
            <person name="Redder P."/>
            <person name="She Q."/>
            <person name="Torarinsson E."/>
            <person name="Greve B."/>
            <person name="Awayez M."/>
            <person name="Zibat A."/>
            <person name="Klenk H.-P."/>
            <person name="Garrett R.A."/>
        </authorList>
    </citation>
    <scope>NUCLEOTIDE SEQUENCE [LARGE SCALE GENOMIC DNA]</scope>
    <source>
        <strain>ATCC 33909 / DSM 639 / JCM 8929 / NBRC 15157 / NCIMB 11770</strain>
    </source>
</reference>
<protein>
    <recommendedName>
        <fullName evidence="1">Phosphoribosylformylglycinamidine synthase subunit PurL</fullName>
        <shortName evidence="1">FGAM synthase</shortName>
        <ecNumber evidence="1">6.3.5.3</ecNumber>
    </recommendedName>
    <alternativeName>
        <fullName evidence="1">Formylglycinamide ribonucleotide amidotransferase subunit II</fullName>
        <shortName evidence="1">FGAR amidotransferase II</shortName>
        <shortName evidence="1">FGAR-AT II</shortName>
    </alternativeName>
    <alternativeName>
        <fullName evidence="1">Glutamine amidotransferase PurL</fullName>
    </alternativeName>
    <alternativeName>
        <fullName evidence="1">Phosphoribosylformylglycinamidine synthase subunit II</fullName>
    </alternativeName>
</protein>
<proteinExistence type="inferred from homology"/>
<keyword id="KW-0067">ATP-binding</keyword>
<keyword id="KW-0963">Cytoplasm</keyword>
<keyword id="KW-0436">Ligase</keyword>
<keyword id="KW-0460">Magnesium</keyword>
<keyword id="KW-0479">Metal-binding</keyword>
<keyword id="KW-0547">Nucleotide-binding</keyword>
<keyword id="KW-0658">Purine biosynthesis</keyword>
<keyword id="KW-1185">Reference proteome</keyword>
<name>PURL_SULAC</name>
<gene>
    <name evidence="1" type="primary">purL</name>
    <name type="ordered locus">Saci_1610</name>
</gene>
<sequence>MRLSLSSQEMELVRKFLGREPKEEEWLVVDALWSEHCSYKSSKIFLRSFPSEGERVVMGIEDWQDAGALDVGDGWAVVLKLESHNHPSAIDPFNGAATGIGGIIRDIISKGARPIALLDMIRVGNLNNSRNRWLLKNIIAGIGFYGNSIGVPVVAGELAFDETYNDNPLVDVAGLGVVKKDKIVPSVVKEAGLKIVLVGLTGLDGLGGASFASRKLSGEDEIGAVQIADPFAGKIVLDVTLQIADKVEAIKDLGGGGLVVGITEMANGLGVEVELDKIPLRVKDLTPGEILVSETQERMVFAVKPERVKEVCEAFEYYEYPCAVIGEFTNDTSIRFLYKGKEVVNLPSSLLLNPPRYKWGVKKTKYSVYYEKPNINLEVAVKEILSYPDLVSKFWAYSQFDYEVGTSTVLKPGEADSGLISLPNGKLLAIKGDANPDLCAEDSYECGRYIVAEAYRNLATVGAKGIGVVDHLQFGDPKKPEVYYQFVEAVRGIAEASKYFGTPIVGGKVSFYNENKEGKPIKPTPLVVMAGLVQDKFLRPKITEGASIIMIGFTREEMGGSLLAKIFGNYGDVPKTRLNEELLSSELVIKAINDGKIIFAKDISKGGLVGALLPILVRGFGVSIDTNLIPSDTDDVISKLFSENGGRFIVLSEREDDINWLESQSRGIYVSKIGEVTREQYVMWLREGKKIDLTKEVNNYHRYLEEVTSD</sequence>
<accession>Q4J8F8</accession>